<keyword id="KW-0030">Aminoacyl-tRNA synthetase</keyword>
<keyword id="KW-0067">ATP-binding</keyword>
<keyword id="KW-0963">Cytoplasm</keyword>
<keyword id="KW-0436">Ligase</keyword>
<keyword id="KW-0547">Nucleotide-binding</keyword>
<keyword id="KW-0648">Protein biosynthesis</keyword>
<keyword id="KW-1185">Reference proteome</keyword>
<protein>
    <recommendedName>
        <fullName evidence="1">Tryptophan--tRNA ligase</fullName>
        <ecNumber evidence="1">6.1.1.2</ecNumber>
    </recommendedName>
    <alternativeName>
        <fullName evidence="1">Tryptophanyl-tRNA synthetase</fullName>
        <shortName evidence="1">TrpRS</shortName>
    </alternativeName>
</protein>
<sequence>MKKVIFSGIQPSGQLTLGNYIGALKQFGQFQDEYECFYCIVDEHAITVPQDRLKLREQTRSLAALYLAVGLDPEKSTLFIQSEVAAHAQAAWILQCNVYIGELERMTQFKDKSAGKAGVSAGLLTYPPLMAADILLYQTDLVPVGEDQKQHIELTRDLAERFNKKHADIFTMPEVFIPKQGARVMSLQDPTKKMSKSDANLKNAIFLLDPPATIRKKIKSAVTDSSGIIEYNKEEKPGVSNLLTIYSVITGETIASIEEKYVGKGYGDFKTDLAELVVSELEPIQERYYAYLKSEELDTILDAGAEKAARVANKTLKKMENGVGLGRKRRK</sequence>
<gene>
    <name evidence="1" type="primary">trpS</name>
    <name type="ordered locus">lmo2198</name>
</gene>
<dbReference type="EC" id="6.1.1.2" evidence="1"/>
<dbReference type="EMBL" id="AL591982">
    <property type="protein sequence ID" value="CAD00276.1"/>
    <property type="molecule type" value="Genomic_DNA"/>
</dbReference>
<dbReference type="PIR" id="AF1349">
    <property type="entry name" value="AF1349"/>
</dbReference>
<dbReference type="RefSeq" id="NP_465722.1">
    <property type="nucleotide sequence ID" value="NC_003210.1"/>
</dbReference>
<dbReference type="RefSeq" id="WP_003722321.1">
    <property type="nucleotide sequence ID" value="NZ_CP149495.1"/>
</dbReference>
<dbReference type="SMR" id="Q8Y577"/>
<dbReference type="STRING" id="169963.gene:17594889"/>
<dbReference type="PaxDb" id="169963-lmo2198"/>
<dbReference type="EnsemblBacteria" id="CAD00276">
    <property type="protein sequence ID" value="CAD00276"/>
    <property type="gene ID" value="CAD00276"/>
</dbReference>
<dbReference type="GeneID" id="984829"/>
<dbReference type="KEGG" id="lmo:lmo2198"/>
<dbReference type="PATRIC" id="fig|169963.11.peg.2250"/>
<dbReference type="eggNOG" id="COG0180">
    <property type="taxonomic scope" value="Bacteria"/>
</dbReference>
<dbReference type="HOGENOM" id="CLU_029244_1_1_9"/>
<dbReference type="OrthoDB" id="9801042at2"/>
<dbReference type="PhylomeDB" id="Q8Y577"/>
<dbReference type="BioCyc" id="LMON169963:LMO2198-MONOMER"/>
<dbReference type="Proteomes" id="UP000000817">
    <property type="component" value="Chromosome"/>
</dbReference>
<dbReference type="GO" id="GO:0005829">
    <property type="term" value="C:cytosol"/>
    <property type="evidence" value="ECO:0000318"/>
    <property type="project" value="GO_Central"/>
</dbReference>
<dbReference type="GO" id="GO:0005524">
    <property type="term" value="F:ATP binding"/>
    <property type="evidence" value="ECO:0007669"/>
    <property type="project" value="UniProtKB-UniRule"/>
</dbReference>
<dbReference type="GO" id="GO:0004830">
    <property type="term" value="F:tryptophan-tRNA ligase activity"/>
    <property type="evidence" value="ECO:0000318"/>
    <property type="project" value="GO_Central"/>
</dbReference>
<dbReference type="GO" id="GO:0006436">
    <property type="term" value="P:tryptophanyl-tRNA aminoacylation"/>
    <property type="evidence" value="ECO:0000318"/>
    <property type="project" value="GO_Central"/>
</dbReference>
<dbReference type="CDD" id="cd00806">
    <property type="entry name" value="TrpRS_core"/>
    <property type="match status" value="1"/>
</dbReference>
<dbReference type="FunFam" id="1.10.240.10:FF:000002">
    <property type="entry name" value="Tryptophan--tRNA ligase"/>
    <property type="match status" value="1"/>
</dbReference>
<dbReference type="Gene3D" id="3.40.50.620">
    <property type="entry name" value="HUPs"/>
    <property type="match status" value="1"/>
</dbReference>
<dbReference type="Gene3D" id="1.10.240.10">
    <property type="entry name" value="Tyrosyl-Transfer RNA Synthetase"/>
    <property type="match status" value="1"/>
</dbReference>
<dbReference type="HAMAP" id="MF_00140_B">
    <property type="entry name" value="Trp_tRNA_synth_B"/>
    <property type="match status" value="1"/>
</dbReference>
<dbReference type="InterPro" id="IPR001412">
    <property type="entry name" value="aa-tRNA-synth_I_CS"/>
</dbReference>
<dbReference type="InterPro" id="IPR002305">
    <property type="entry name" value="aa-tRNA-synth_Ic"/>
</dbReference>
<dbReference type="InterPro" id="IPR014729">
    <property type="entry name" value="Rossmann-like_a/b/a_fold"/>
</dbReference>
<dbReference type="InterPro" id="IPR002306">
    <property type="entry name" value="Trp-tRNA-ligase"/>
</dbReference>
<dbReference type="InterPro" id="IPR024109">
    <property type="entry name" value="Trp-tRNA-ligase_bac-type"/>
</dbReference>
<dbReference type="InterPro" id="IPR050203">
    <property type="entry name" value="Trp-tRNA_synthetase"/>
</dbReference>
<dbReference type="NCBIfam" id="TIGR00233">
    <property type="entry name" value="trpS"/>
    <property type="match status" value="1"/>
</dbReference>
<dbReference type="PANTHER" id="PTHR43766">
    <property type="entry name" value="TRYPTOPHAN--TRNA LIGASE, MITOCHONDRIAL"/>
    <property type="match status" value="1"/>
</dbReference>
<dbReference type="PANTHER" id="PTHR43766:SF1">
    <property type="entry name" value="TRYPTOPHAN--TRNA LIGASE, MITOCHONDRIAL"/>
    <property type="match status" value="1"/>
</dbReference>
<dbReference type="Pfam" id="PF00579">
    <property type="entry name" value="tRNA-synt_1b"/>
    <property type="match status" value="1"/>
</dbReference>
<dbReference type="PRINTS" id="PR01039">
    <property type="entry name" value="TRNASYNTHTRP"/>
</dbReference>
<dbReference type="SUPFAM" id="SSF52374">
    <property type="entry name" value="Nucleotidylyl transferase"/>
    <property type="match status" value="1"/>
</dbReference>
<dbReference type="PROSITE" id="PS00178">
    <property type="entry name" value="AA_TRNA_LIGASE_I"/>
    <property type="match status" value="1"/>
</dbReference>
<feature type="chain" id="PRO_0000136644" description="Tryptophan--tRNA ligase">
    <location>
        <begin position="1"/>
        <end position="331"/>
    </location>
</feature>
<feature type="short sequence motif" description="'HIGH' region" evidence="1">
    <location>
        <begin position="11"/>
        <end position="19"/>
    </location>
</feature>
<feature type="short sequence motif" description="'KMSKS' region" evidence="1">
    <location>
        <begin position="193"/>
        <end position="197"/>
    </location>
</feature>
<feature type="binding site" evidence="1">
    <location>
        <begin position="10"/>
        <end position="12"/>
    </location>
    <ligand>
        <name>ATP</name>
        <dbReference type="ChEBI" id="CHEBI:30616"/>
    </ligand>
</feature>
<feature type="binding site" evidence="1">
    <location>
        <begin position="18"/>
        <end position="19"/>
    </location>
    <ligand>
        <name>ATP</name>
        <dbReference type="ChEBI" id="CHEBI:30616"/>
    </ligand>
</feature>
<feature type="binding site" evidence="1">
    <location>
        <position position="133"/>
    </location>
    <ligand>
        <name>L-tryptophan</name>
        <dbReference type="ChEBI" id="CHEBI:57912"/>
    </ligand>
</feature>
<feature type="binding site" evidence="1">
    <location>
        <begin position="145"/>
        <end position="147"/>
    </location>
    <ligand>
        <name>ATP</name>
        <dbReference type="ChEBI" id="CHEBI:30616"/>
    </ligand>
</feature>
<feature type="binding site" evidence="1">
    <location>
        <position position="184"/>
    </location>
    <ligand>
        <name>ATP</name>
        <dbReference type="ChEBI" id="CHEBI:30616"/>
    </ligand>
</feature>
<feature type="binding site" evidence="1">
    <location>
        <begin position="193"/>
        <end position="197"/>
    </location>
    <ligand>
        <name>ATP</name>
        <dbReference type="ChEBI" id="CHEBI:30616"/>
    </ligand>
</feature>
<accession>Q8Y577</accession>
<reference key="1">
    <citation type="journal article" date="2001" name="Science">
        <title>Comparative genomics of Listeria species.</title>
        <authorList>
            <person name="Glaser P."/>
            <person name="Frangeul L."/>
            <person name="Buchrieser C."/>
            <person name="Rusniok C."/>
            <person name="Amend A."/>
            <person name="Baquero F."/>
            <person name="Berche P."/>
            <person name="Bloecker H."/>
            <person name="Brandt P."/>
            <person name="Chakraborty T."/>
            <person name="Charbit A."/>
            <person name="Chetouani F."/>
            <person name="Couve E."/>
            <person name="de Daruvar A."/>
            <person name="Dehoux P."/>
            <person name="Domann E."/>
            <person name="Dominguez-Bernal G."/>
            <person name="Duchaud E."/>
            <person name="Durant L."/>
            <person name="Dussurget O."/>
            <person name="Entian K.-D."/>
            <person name="Fsihi H."/>
            <person name="Garcia-del Portillo F."/>
            <person name="Garrido P."/>
            <person name="Gautier L."/>
            <person name="Goebel W."/>
            <person name="Gomez-Lopez N."/>
            <person name="Hain T."/>
            <person name="Hauf J."/>
            <person name="Jackson D."/>
            <person name="Jones L.-M."/>
            <person name="Kaerst U."/>
            <person name="Kreft J."/>
            <person name="Kuhn M."/>
            <person name="Kunst F."/>
            <person name="Kurapkat G."/>
            <person name="Madueno E."/>
            <person name="Maitournam A."/>
            <person name="Mata Vicente J."/>
            <person name="Ng E."/>
            <person name="Nedjari H."/>
            <person name="Nordsiek G."/>
            <person name="Novella S."/>
            <person name="de Pablos B."/>
            <person name="Perez-Diaz J.-C."/>
            <person name="Purcell R."/>
            <person name="Remmel B."/>
            <person name="Rose M."/>
            <person name="Schlueter T."/>
            <person name="Simoes N."/>
            <person name="Tierrez A."/>
            <person name="Vazquez-Boland J.-A."/>
            <person name="Voss H."/>
            <person name="Wehland J."/>
            <person name="Cossart P."/>
        </authorList>
    </citation>
    <scope>NUCLEOTIDE SEQUENCE [LARGE SCALE GENOMIC DNA]</scope>
    <source>
        <strain>ATCC BAA-679 / EGD-e</strain>
    </source>
</reference>
<proteinExistence type="inferred from homology"/>
<comment type="function">
    <text evidence="1">Catalyzes the attachment of tryptophan to tRNA(Trp).</text>
</comment>
<comment type="catalytic activity">
    <reaction evidence="1">
        <text>tRNA(Trp) + L-tryptophan + ATP = L-tryptophyl-tRNA(Trp) + AMP + diphosphate + H(+)</text>
        <dbReference type="Rhea" id="RHEA:24080"/>
        <dbReference type="Rhea" id="RHEA-COMP:9671"/>
        <dbReference type="Rhea" id="RHEA-COMP:9705"/>
        <dbReference type="ChEBI" id="CHEBI:15378"/>
        <dbReference type="ChEBI" id="CHEBI:30616"/>
        <dbReference type="ChEBI" id="CHEBI:33019"/>
        <dbReference type="ChEBI" id="CHEBI:57912"/>
        <dbReference type="ChEBI" id="CHEBI:78442"/>
        <dbReference type="ChEBI" id="CHEBI:78535"/>
        <dbReference type="ChEBI" id="CHEBI:456215"/>
        <dbReference type="EC" id="6.1.1.2"/>
    </reaction>
</comment>
<comment type="subunit">
    <text evidence="1">Homodimer.</text>
</comment>
<comment type="subcellular location">
    <subcellularLocation>
        <location evidence="1">Cytoplasm</location>
    </subcellularLocation>
</comment>
<comment type="similarity">
    <text evidence="1">Belongs to the class-I aminoacyl-tRNA synthetase family.</text>
</comment>
<evidence type="ECO:0000255" key="1">
    <source>
        <dbReference type="HAMAP-Rule" id="MF_00140"/>
    </source>
</evidence>
<name>SYW_LISMO</name>
<organism>
    <name type="scientific">Listeria monocytogenes serovar 1/2a (strain ATCC BAA-679 / EGD-e)</name>
    <dbReference type="NCBI Taxonomy" id="169963"/>
    <lineage>
        <taxon>Bacteria</taxon>
        <taxon>Bacillati</taxon>
        <taxon>Bacillota</taxon>
        <taxon>Bacilli</taxon>
        <taxon>Bacillales</taxon>
        <taxon>Listeriaceae</taxon>
        <taxon>Listeria</taxon>
    </lineage>
</organism>